<keyword id="KW-0249">Electron transport</keyword>
<keyword id="KW-0349">Heme</keyword>
<keyword id="KW-0408">Iron</keyword>
<keyword id="KW-0472">Membrane</keyword>
<keyword id="KW-0479">Metal-binding</keyword>
<keyword id="KW-0496">Mitochondrion</keyword>
<keyword id="KW-0999">Mitochondrion inner membrane</keyword>
<keyword id="KW-0679">Respiratory chain</keyword>
<keyword id="KW-0812">Transmembrane</keyword>
<keyword id="KW-1133">Transmembrane helix</keyword>
<keyword id="KW-0813">Transport</keyword>
<keyword id="KW-0830">Ubiquinone</keyword>
<name>CYB_ANOSQ</name>
<sequence length="379" mass="42649">MTNIRKTHPLMKIINNSFIDLPAPSNISSWWNFGSLLGICLIIQTLTGLFLAMHYTSDTLTAFSSVTHICRDVNYGWLIRYLHANGASMFFICLFLHVGRGLYYGSYLFLETWNIGALLLFAVMATAFMGYVLPWGQMSFWGATVITNLLSAIPYIGSDLVQWIWGGFSVDKATLTRFFAFHFILPFIVAALAGVHLLFLHETGSNNPSGLSSDADKIPFHPYYTIKDILGVLMLILILMMLVLFSPDLLGDPDNYTPANPLNTPPHIKPEWYFLFAYAILRSIPNKLGGVLALVLSILVLAFIPLLHTSKQRSMMFRPLSQCLFWILVADLITLTWIGGQPVEHPFIIIGQLASILYFTLILILMPLASLFENNLMKW</sequence>
<organism>
    <name type="scientific">Anourosorex squamipes</name>
    <name type="common">Chinese mole shrew</name>
    <dbReference type="NCBI Taxonomy" id="127560"/>
    <lineage>
        <taxon>Eukaryota</taxon>
        <taxon>Metazoa</taxon>
        <taxon>Chordata</taxon>
        <taxon>Craniata</taxon>
        <taxon>Vertebrata</taxon>
        <taxon>Euteleostomi</taxon>
        <taxon>Mammalia</taxon>
        <taxon>Eutheria</taxon>
        <taxon>Laurasiatheria</taxon>
        <taxon>Eulipotyphla</taxon>
        <taxon>Soricidae</taxon>
        <taxon>Soricinae</taxon>
        <taxon>Anourosorex</taxon>
    </lineage>
</organism>
<dbReference type="EMBL" id="AB175090">
    <property type="protein sequence ID" value="BAE92655.1"/>
    <property type="molecule type" value="Genomic_DNA"/>
</dbReference>
<dbReference type="SMR" id="Q1XIP1"/>
<dbReference type="GO" id="GO:0005743">
    <property type="term" value="C:mitochondrial inner membrane"/>
    <property type="evidence" value="ECO:0007669"/>
    <property type="project" value="UniProtKB-SubCell"/>
</dbReference>
<dbReference type="GO" id="GO:0045275">
    <property type="term" value="C:respiratory chain complex III"/>
    <property type="evidence" value="ECO:0007669"/>
    <property type="project" value="InterPro"/>
</dbReference>
<dbReference type="GO" id="GO:0046872">
    <property type="term" value="F:metal ion binding"/>
    <property type="evidence" value="ECO:0007669"/>
    <property type="project" value="UniProtKB-KW"/>
</dbReference>
<dbReference type="GO" id="GO:0008121">
    <property type="term" value="F:ubiquinol-cytochrome-c reductase activity"/>
    <property type="evidence" value="ECO:0007669"/>
    <property type="project" value="InterPro"/>
</dbReference>
<dbReference type="GO" id="GO:0006122">
    <property type="term" value="P:mitochondrial electron transport, ubiquinol to cytochrome c"/>
    <property type="evidence" value="ECO:0007669"/>
    <property type="project" value="TreeGrafter"/>
</dbReference>
<dbReference type="CDD" id="cd00290">
    <property type="entry name" value="cytochrome_b_C"/>
    <property type="match status" value="1"/>
</dbReference>
<dbReference type="CDD" id="cd00284">
    <property type="entry name" value="Cytochrome_b_N"/>
    <property type="match status" value="1"/>
</dbReference>
<dbReference type="FunFam" id="1.20.810.10:FF:000002">
    <property type="entry name" value="Cytochrome b"/>
    <property type="match status" value="1"/>
</dbReference>
<dbReference type="Gene3D" id="1.20.810.10">
    <property type="entry name" value="Cytochrome Bc1 Complex, Chain C"/>
    <property type="match status" value="1"/>
</dbReference>
<dbReference type="InterPro" id="IPR005798">
    <property type="entry name" value="Cyt_b/b6_C"/>
</dbReference>
<dbReference type="InterPro" id="IPR036150">
    <property type="entry name" value="Cyt_b/b6_C_sf"/>
</dbReference>
<dbReference type="InterPro" id="IPR005797">
    <property type="entry name" value="Cyt_b/b6_N"/>
</dbReference>
<dbReference type="InterPro" id="IPR027387">
    <property type="entry name" value="Cytb/b6-like_sf"/>
</dbReference>
<dbReference type="InterPro" id="IPR030689">
    <property type="entry name" value="Cytochrome_b"/>
</dbReference>
<dbReference type="InterPro" id="IPR048260">
    <property type="entry name" value="Cytochrome_b_C_euk/bac"/>
</dbReference>
<dbReference type="InterPro" id="IPR048259">
    <property type="entry name" value="Cytochrome_b_N_euk/bac"/>
</dbReference>
<dbReference type="InterPro" id="IPR016174">
    <property type="entry name" value="Di-haem_cyt_TM"/>
</dbReference>
<dbReference type="PANTHER" id="PTHR19271">
    <property type="entry name" value="CYTOCHROME B"/>
    <property type="match status" value="1"/>
</dbReference>
<dbReference type="PANTHER" id="PTHR19271:SF16">
    <property type="entry name" value="CYTOCHROME B"/>
    <property type="match status" value="1"/>
</dbReference>
<dbReference type="Pfam" id="PF00032">
    <property type="entry name" value="Cytochrom_B_C"/>
    <property type="match status" value="1"/>
</dbReference>
<dbReference type="Pfam" id="PF00033">
    <property type="entry name" value="Cytochrome_B"/>
    <property type="match status" value="1"/>
</dbReference>
<dbReference type="PIRSF" id="PIRSF038885">
    <property type="entry name" value="COB"/>
    <property type="match status" value="1"/>
</dbReference>
<dbReference type="SUPFAM" id="SSF81648">
    <property type="entry name" value="a domain/subunit of cytochrome bc1 complex (Ubiquinol-cytochrome c reductase)"/>
    <property type="match status" value="1"/>
</dbReference>
<dbReference type="SUPFAM" id="SSF81342">
    <property type="entry name" value="Transmembrane di-heme cytochromes"/>
    <property type="match status" value="1"/>
</dbReference>
<dbReference type="PROSITE" id="PS51003">
    <property type="entry name" value="CYTB_CTER"/>
    <property type="match status" value="1"/>
</dbReference>
<dbReference type="PROSITE" id="PS51002">
    <property type="entry name" value="CYTB_NTER"/>
    <property type="match status" value="1"/>
</dbReference>
<evidence type="ECO:0000250" key="1"/>
<evidence type="ECO:0000250" key="2">
    <source>
        <dbReference type="UniProtKB" id="P00157"/>
    </source>
</evidence>
<evidence type="ECO:0000255" key="3">
    <source>
        <dbReference type="PROSITE-ProRule" id="PRU00967"/>
    </source>
</evidence>
<evidence type="ECO:0000255" key="4">
    <source>
        <dbReference type="PROSITE-ProRule" id="PRU00968"/>
    </source>
</evidence>
<proteinExistence type="inferred from homology"/>
<reference key="1">
    <citation type="submission" date="2004-03" db="EMBL/GenBank/DDBJ databases">
        <title>Molecular phylogenetics of the Soricidae (Insectivora, Mammalia) based on mitochondrial cytochrome b gene sequences.</title>
        <authorList>
            <person name="Ohdachi S.D."/>
            <person name="Iwasa M.A."/>
            <person name="Abe H."/>
            <person name="Vogel P."/>
            <person name="Oshida T."/>
            <person name="Lin L.K."/>
            <person name="Hasegawa M."/>
        </authorList>
    </citation>
    <scope>NUCLEOTIDE SEQUENCE [GENOMIC DNA]</scope>
</reference>
<accession>Q1XIP1</accession>
<protein>
    <recommendedName>
        <fullName>Cytochrome b</fullName>
    </recommendedName>
    <alternativeName>
        <fullName>Complex III subunit 3</fullName>
    </alternativeName>
    <alternativeName>
        <fullName>Complex III subunit III</fullName>
    </alternativeName>
    <alternativeName>
        <fullName>Cytochrome b-c1 complex subunit 3</fullName>
    </alternativeName>
    <alternativeName>
        <fullName>Ubiquinol-cytochrome-c reductase complex cytochrome b subunit</fullName>
    </alternativeName>
</protein>
<comment type="function">
    <text evidence="2">Component of the ubiquinol-cytochrome c reductase complex (complex III or cytochrome b-c1 complex) that is part of the mitochondrial respiratory chain. The b-c1 complex mediates electron transfer from ubiquinol to cytochrome c. Contributes to the generation of a proton gradient across the mitochondrial membrane that is then used for ATP synthesis.</text>
</comment>
<comment type="cofactor">
    <cofactor evidence="2">
        <name>heme b</name>
        <dbReference type="ChEBI" id="CHEBI:60344"/>
    </cofactor>
    <text evidence="2">Binds 2 heme b groups non-covalently.</text>
</comment>
<comment type="subunit">
    <text evidence="2">The cytochrome bc1 complex contains 11 subunits: 3 respiratory subunits (MT-CYB, CYC1 and UQCRFS1), 2 core proteins (UQCRC1 and UQCRC2) and 6 low-molecular weight proteins (UQCRH/QCR6, UQCRB/QCR7, UQCRQ/QCR8, UQCR10/QCR9, UQCR11/QCR10 and a cleavage product of UQCRFS1). This cytochrome bc1 complex then forms a dimer.</text>
</comment>
<comment type="subcellular location">
    <subcellularLocation>
        <location evidence="2">Mitochondrion inner membrane</location>
        <topology evidence="2">Multi-pass membrane protein</topology>
    </subcellularLocation>
</comment>
<comment type="miscellaneous">
    <text evidence="1">Heme 1 (or BL or b562) is low-potential and absorbs at about 562 nm, and heme 2 (or BH or b566) is high-potential and absorbs at about 566 nm.</text>
</comment>
<comment type="similarity">
    <text evidence="3 4">Belongs to the cytochrome b family.</text>
</comment>
<comment type="caution">
    <text evidence="2">The full-length protein contains only eight transmembrane helices, not nine as predicted by bioinformatics tools.</text>
</comment>
<gene>
    <name type="primary">MT-CYB</name>
    <name type="synonym">COB</name>
    <name type="synonym">CYTB</name>
    <name type="synonym">MTCYB</name>
</gene>
<geneLocation type="mitochondrion"/>
<feature type="chain" id="PRO_0000235206" description="Cytochrome b">
    <location>
        <begin position="1"/>
        <end position="379"/>
    </location>
</feature>
<feature type="transmembrane region" description="Helical" evidence="2">
    <location>
        <begin position="33"/>
        <end position="53"/>
    </location>
</feature>
<feature type="transmembrane region" description="Helical" evidence="2">
    <location>
        <begin position="77"/>
        <end position="98"/>
    </location>
</feature>
<feature type="transmembrane region" description="Helical" evidence="2">
    <location>
        <begin position="113"/>
        <end position="133"/>
    </location>
</feature>
<feature type="transmembrane region" description="Helical" evidence="2">
    <location>
        <begin position="178"/>
        <end position="198"/>
    </location>
</feature>
<feature type="transmembrane region" description="Helical" evidence="2">
    <location>
        <begin position="226"/>
        <end position="246"/>
    </location>
</feature>
<feature type="transmembrane region" description="Helical" evidence="2">
    <location>
        <begin position="288"/>
        <end position="308"/>
    </location>
</feature>
<feature type="transmembrane region" description="Helical" evidence="2">
    <location>
        <begin position="320"/>
        <end position="340"/>
    </location>
</feature>
<feature type="transmembrane region" description="Helical" evidence="2">
    <location>
        <begin position="347"/>
        <end position="367"/>
    </location>
</feature>
<feature type="binding site" description="axial binding residue" evidence="2">
    <location>
        <position position="83"/>
    </location>
    <ligand>
        <name>heme b</name>
        <dbReference type="ChEBI" id="CHEBI:60344"/>
        <label>b562</label>
    </ligand>
    <ligandPart>
        <name>Fe</name>
        <dbReference type="ChEBI" id="CHEBI:18248"/>
    </ligandPart>
</feature>
<feature type="binding site" description="axial binding residue" evidence="2">
    <location>
        <position position="97"/>
    </location>
    <ligand>
        <name>heme b</name>
        <dbReference type="ChEBI" id="CHEBI:60344"/>
        <label>b566</label>
    </ligand>
    <ligandPart>
        <name>Fe</name>
        <dbReference type="ChEBI" id="CHEBI:18248"/>
    </ligandPart>
</feature>
<feature type="binding site" description="axial binding residue" evidence="2">
    <location>
        <position position="182"/>
    </location>
    <ligand>
        <name>heme b</name>
        <dbReference type="ChEBI" id="CHEBI:60344"/>
        <label>b562</label>
    </ligand>
    <ligandPart>
        <name>Fe</name>
        <dbReference type="ChEBI" id="CHEBI:18248"/>
    </ligandPart>
</feature>
<feature type="binding site" description="axial binding residue" evidence="2">
    <location>
        <position position="196"/>
    </location>
    <ligand>
        <name>heme b</name>
        <dbReference type="ChEBI" id="CHEBI:60344"/>
        <label>b566</label>
    </ligand>
    <ligandPart>
        <name>Fe</name>
        <dbReference type="ChEBI" id="CHEBI:18248"/>
    </ligandPart>
</feature>
<feature type="binding site" evidence="2">
    <location>
        <position position="201"/>
    </location>
    <ligand>
        <name>a ubiquinone</name>
        <dbReference type="ChEBI" id="CHEBI:16389"/>
    </ligand>
</feature>